<accession>Q9SIW3</accession>
<accession>Q943Z9</accession>
<gene>
    <name type="primary">SFH7</name>
    <name type="ordered locus">At2g16380</name>
    <name type="ORF">F16F14.12</name>
</gene>
<proteinExistence type="evidence at transcript level"/>
<name>SFH7_ARATH</name>
<comment type="function">
    <text evidence="1">Required for transport of secretory proteins from the Golgi complex. Catalyzes the transfer of phosphatidylinositol and phosphatidylcholine between membranes in vitro (By similarity).</text>
</comment>
<comment type="subcellular location">
    <subcellularLocation>
        <location evidence="1">Golgi apparatus membrane</location>
        <topology evidence="1">Peripheral membrane protein</topology>
    </subcellularLocation>
    <subcellularLocation>
        <location evidence="1">Cell membrane</location>
        <topology evidence="1">Peripheral membrane protein</topology>
    </subcellularLocation>
</comment>
<comment type="similarity">
    <text evidence="4">Belongs to the SFH family.</text>
</comment>
<organism>
    <name type="scientific">Arabidopsis thaliana</name>
    <name type="common">Mouse-ear cress</name>
    <dbReference type="NCBI Taxonomy" id="3702"/>
    <lineage>
        <taxon>Eukaryota</taxon>
        <taxon>Viridiplantae</taxon>
        <taxon>Streptophyta</taxon>
        <taxon>Embryophyta</taxon>
        <taxon>Tracheophyta</taxon>
        <taxon>Spermatophyta</taxon>
        <taxon>Magnoliopsida</taxon>
        <taxon>eudicotyledons</taxon>
        <taxon>Gunneridae</taxon>
        <taxon>Pentapetalae</taxon>
        <taxon>rosids</taxon>
        <taxon>malvids</taxon>
        <taxon>Brassicales</taxon>
        <taxon>Brassicaceae</taxon>
        <taxon>Camelineae</taxon>
        <taxon>Arabidopsis</taxon>
    </lineage>
</organism>
<keyword id="KW-1003">Cell membrane</keyword>
<keyword id="KW-0175">Coiled coil</keyword>
<keyword id="KW-0333">Golgi apparatus</keyword>
<keyword id="KW-0472">Membrane</keyword>
<keyword id="KW-0653">Protein transport</keyword>
<keyword id="KW-1185">Reference proteome</keyword>
<keyword id="KW-0813">Transport</keyword>
<protein>
    <recommendedName>
        <fullName>Phosphatidylinositol/phosphatidylcholine transfer protein SFH7</fullName>
    </recommendedName>
    <alternativeName>
        <fullName>Protein SEC FOURTEEN HOMOLOGS 7</fullName>
        <shortName>AtSFH7</shortName>
    </alternativeName>
</protein>
<evidence type="ECO:0000250" key="1"/>
<evidence type="ECO:0000255" key="2"/>
<evidence type="ECO:0000255" key="3">
    <source>
        <dbReference type="PROSITE-ProRule" id="PRU00056"/>
    </source>
</evidence>
<evidence type="ECO:0000305" key="4"/>
<feature type="chain" id="PRO_0000423467" description="Phosphatidylinositol/phosphatidylcholine transfer protein SFH7">
    <location>
        <begin position="1"/>
        <end position="547"/>
    </location>
</feature>
<feature type="domain" description="CRAL-TRIO" evidence="3">
    <location>
        <begin position="130"/>
        <end position="304"/>
    </location>
</feature>
<feature type="coiled-coil region" evidence="2">
    <location>
        <begin position="464"/>
        <end position="526"/>
    </location>
</feature>
<reference key="1">
    <citation type="journal article" date="1999" name="Nature">
        <title>Sequence and analysis of chromosome 2 of the plant Arabidopsis thaliana.</title>
        <authorList>
            <person name="Lin X."/>
            <person name="Kaul S."/>
            <person name="Rounsley S.D."/>
            <person name="Shea T.P."/>
            <person name="Benito M.-I."/>
            <person name="Town C.D."/>
            <person name="Fujii C.Y."/>
            <person name="Mason T.M."/>
            <person name="Bowman C.L."/>
            <person name="Barnstead M.E."/>
            <person name="Feldblyum T.V."/>
            <person name="Buell C.R."/>
            <person name="Ketchum K.A."/>
            <person name="Lee J.J."/>
            <person name="Ronning C.M."/>
            <person name="Koo H.L."/>
            <person name="Moffat K.S."/>
            <person name="Cronin L.A."/>
            <person name="Shen M."/>
            <person name="Pai G."/>
            <person name="Van Aken S."/>
            <person name="Umayam L."/>
            <person name="Tallon L.J."/>
            <person name="Gill J.E."/>
            <person name="Adams M.D."/>
            <person name="Carrera A.J."/>
            <person name="Creasy T.H."/>
            <person name="Goodman H.M."/>
            <person name="Somerville C.R."/>
            <person name="Copenhaver G.P."/>
            <person name="Preuss D."/>
            <person name="Nierman W.C."/>
            <person name="White O."/>
            <person name="Eisen J.A."/>
            <person name="Salzberg S.L."/>
            <person name="Fraser C.M."/>
            <person name="Venter J.C."/>
        </authorList>
    </citation>
    <scope>NUCLEOTIDE SEQUENCE [LARGE SCALE GENOMIC DNA]</scope>
    <source>
        <strain>cv. Columbia</strain>
    </source>
</reference>
<reference key="2">
    <citation type="journal article" date="2017" name="Plant J.">
        <title>Araport11: a complete reannotation of the Arabidopsis thaliana reference genome.</title>
        <authorList>
            <person name="Cheng C.Y."/>
            <person name="Krishnakumar V."/>
            <person name="Chan A.P."/>
            <person name="Thibaud-Nissen F."/>
            <person name="Schobel S."/>
            <person name="Town C.D."/>
        </authorList>
    </citation>
    <scope>GENOME REANNOTATION</scope>
    <source>
        <strain>cv. Columbia</strain>
    </source>
</reference>
<reference key="3">
    <citation type="journal article" date="2003" name="Science">
        <title>Empirical analysis of transcriptional activity in the Arabidopsis genome.</title>
        <authorList>
            <person name="Yamada K."/>
            <person name="Lim J."/>
            <person name="Dale J.M."/>
            <person name="Chen H."/>
            <person name="Shinn P."/>
            <person name="Palm C.J."/>
            <person name="Southwick A.M."/>
            <person name="Wu H.C."/>
            <person name="Kim C.J."/>
            <person name="Nguyen M."/>
            <person name="Pham P.K."/>
            <person name="Cheuk R.F."/>
            <person name="Karlin-Newmann G."/>
            <person name="Liu S.X."/>
            <person name="Lam B."/>
            <person name="Sakano H."/>
            <person name="Wu T."/>
            <person name="Yu G."/>
            <person name="Miranda M."/>
            <person name="Quach H.L."/>
            <person name="Tripp M."/>
            <person name="Chang C.H."/>
            <person name="Lee J.M."/>
            <person name="Toriumi M.J."/>
            <person name="Chan M.M."/>
            <person name="Tang C.C."/>
            <person name="Onodera C.S."/>
            <person name="Deng J.M."/>
            <person name="Akiyama K."/>
            <person name="Ansari Y."/>
            <person name="Arakawa T."/>
            <person name="Banh J."/>
            <person name="Banno F."/>
            <person name="Bowser L."/>
            <person name="Brooks S.Y."/>
            <person name="Carninci P."/>
            <person name="Chao Q."/>
            <person name="Choy N."/>
            <person name="Enju A."/>
            <person name="Goldsmith A.D."/>
            <person name="Gurjal M."/>
            <person name="Hansen N.F."/>
            <person name="Hayashizaki Y."/>
            <person name="Johnson-Hopson C."/>
            <person name="Hsuan V.W."/>
            <person name="Iida K."/>
            <person name="Karnes M."/>
            <person name="Khan S."/>
            <person name="Koesema E."/>
            <person name="Ishida J."/>
            <person name="Jiang P.X."/>
            <person name="Jones T."/>
            <person name="Kawai J."/>
            <person name="Kamiya A."/>
            <person name="Meyers C."/>
            <person name="Nakajima M."/>
            <person name="Narusaka M."/>
            <person name="Seki M."/>
            <person name="Sakurai T."/>
            <person name="Satou M."/>
            <person name="Tamse R."/>
            <person name="Vaysberg M."/>
            <person name="Wallender E.K."/>
            <person name="Wong C."/>
            <person name="Yamamura Y."/>
            <person name="Yuan S."/>
            <person name="Shinozaki K."/>
            <person name="Davis R.W."/>
            <person name="Theologis A."/>
            <person name="Ecker J.R."/>
        </authorList>
    </citation>
    <scope>NUCLEOTIDE SEQUENCE [LARGE SCALE MRNA]</scope>
    <source>
        <strain>cv. Columbia</strain>
    </source>
</reference>
<reference key="4">
    <citation type="journal article" date="2005" name="J. Cell Biol.">
        <title>A Sec14p-nodulin domain phosphatidylinositol transfer protein polarizes membrane growth of Arabidopsis thaliana root hairs.</title>
        <authorList>
            <person name="Vincent P."/>
            <person name="Chua M."/>
            <person name="Nogue F."/>
            <person name="Fairbrother A."/>
            <person name="Mekeel H."/>
            <person name="Xu Y."/>
            <person name="Allen N."/>
            <person name="Bibikova T.N."/>
            <person name="Gilroy S."/>
            <person name="Bankaitis V.A."/>
        </authorList>
    </citation>
    <scope>GENE FAMILY</scope>
</reference>
<reference key="5">
    <citation type="journal article" date="2006" name="Nat. Chem. Biol.">
        <title>Phosphatidylinositol transfer proteins and cellular nanoreactors for lipid signaling.</title>
        <authorList>
            <person name="Ile K.E."/>
            <person name="Schaaf G."/>
            <person name="Bankaitis V.A."/>
        </authorList>
    </citation>
    <scope>REVIEW</scope>
</reference>
<sequence length="547" mass="62860">MADTKQDMENSEDGRKLVKMSSLKQKAISASNRFKNSFKKKTRRTSSKIVSVANTDDINGDDYLSVEAFRQVLVLDDLLPPKHDDLHMMLRFLRARKFDKEKAKQMWSDMLQWRMDFGVDTIIEDFEFEEIDQVLKHYPQGYHGVDKEGRPVYIERLGQIDANKLLQATTMDRYEKYHVKEFEKMFKIKFPSCSAAAKKHIDQSTTIFDVQGVGLKNFNKSARELLQRLLKIDNDNYPETLNRMFIINAGPGFRLLWAPIKKFLDPKTTSKIHVLGNKYQPKLLEAIDASELPYFFGGLCTCADKGGCLRSDKGPWNDPELLKIARNPEARFSTISEEDYLLVEEGTSMSMVFEPLERNKMKTIEENVSEKHIDAVDKFMALSLPPKPHLKTLRKGKEPQKKDDSFLVGGVIAFVMGIVAMLRLSKAVPRKLTDVALLTNSVYYEEAKMSKPNQDEVSAPPVSSSEYVIMVKRMAELEEKYKSLDSKSADEALEKDDKLQAALNRVQVLEHELSETKKALDETMVNQQGILAYIEKKNKKKRMFFRF</sequence>
<dbReference type="EMBL" id="AC007047">
    <property type="protein sequence ID" value="AAD22301.2"/>
    <property type="molecule type" value="Genomic_DNA"/>
</dbReference>
<dbReference type="EMBL" id="CP002685">
    <property type="protein sequence ID" value="AEC06490.1"/>
    <property type="molecule type" value="Genomic_DNA"/>
</dbReference>
<dbReference type="EMBL" id="CP002685">
    <property type="protein sequence ID" value="ANM61229.1"/>
    <property type="molecule type" value="Genomic_DNA"/>
</dbReference>
<dbReference type="EMBL" id="AF439836">
    <property type="protein sequence ID" value="AAL27507.1"/>
    <property type="molecule type" value="mRNA"/>
</dbReference>
<dbReference type="PIR" id="F84539">
    <property type="entry name" value="F84539"/>
</dbReference>
<dbReference type="RefSeq" id="NP_001323459.1">
    <property type="nucleotide sequence ID" value="NM_001335474.1"/>
</dbReference>
<dbReference type="RefSeq" id="NP_565387.1">
    <property type="nucleotide sequence ID" value="NM_127192.3"/>
</dbReference>
<dbReference type="SMR" id="Q9SIW3"/>
<dbReference type="FunCoup" id="Q9SIW3">
    <property type="interactions" value="700"/>
</dbReference>
<dbReference type="STRING" id="3702.Q9SIW3"/>
<dbReference type="iPTMnet" id="Q9SIW3"/>
<dbReference type="PaxDb" id="3702-AT2G16380.1"/>
<dbReference type="EnsemblPlants" id="AT2G16380.1">
    <property type="protein sequence ID" value="AT2G16380.1"/>
    <property type="gene ID" value="AT2G16380"/>
</dbReference>
<dbReference type="EnsemblPlants" id="AT2G16380.2">
    <property type="protein sequence ID" value="AT2G16380.2"/>
    <property type="gene ID" value="AT2G16380"/>
</dbReference>
<dbReference type="GeneID" id="816135"/>
<dbReference type="Gramene" id="AT2G16380.1">
    <property type="protein sequence ID" value="AT2G16380.1"/>
    <property type="gene ID" value="AT2G16380"/>
</dbReference>
<dbReference type="Gramene" id="AT2G16380.2">
    <property type="protein sequence ID" value="AT2G16380.2"/>
    <property type="gene ID" value="AT2G16380"/>
</dbReference>
<dbReference type="KEGG" id="ath:AT2G16380"/>
<dbReference type="Araport" id="AT2G16380"/>
<dbReference type="TAIR" id="AT2G16380"/>
<dbReference type="eggNOG" id="KOG1471">
    <property type="taxonomic scope" value="Eukaryota"/>
</dbReference>
<dbReference type="HOGENOM" id="CLU_014001_11_1_1"/>
<dbReference type="InParanoid" id="Q9SIW3"/>
<dbReference type="OMA" id="MADTKQD"/>
<dbReference type="PhylomeDB" id="Q9SIW3"/>
<dbReference type="PRO" id="PR:Q9SIW3"/>
<dbReference type="Proteomes" id="UP000006548">
    <property type="component" value="Chromosome 2"/>
</dbReference>
<dbReference type="ExpressionAtlas" id="Q9SIW3">
    <property type="expression patterns" value="baseline and differential"/>
</dbReference>
<dbReference type="GO" id="GO:0000139">
    <property type="term" value="C:Golgi membrane"/>
    <property type="evidence" value="ECO:0007669"/>
    <property type="project" value="UniProtKB-SubCell"/>
</dbReference>
<dbReference type="GO" id="GO:0005886">
    <property type="term" value="C:plasma membrane"/>
    <property type="evidence" value="ECO:0007669"/>
    <property type="project" value="UniProtKB-SubCell"/>
</dbReference>
<dbReference type="GO" id="GO:0015031">
    <property type="term" value="P:protein transport"/>
    <property type="evidence" value="ECO:0007669"/>
    <property type="project" value="UniProtKB-KW"/>
</dbReference>
<dbReference type="CDD" id="cd00170">
    <property type="entry name" value="SEC14"/>
    <property type="match status" value="1"/>
</dbReference>
<dbReference type="FunFam" id="3.40.525.10:FF:000011">
    <property type="entry name" value="SEC14 cytosolic factor"/>
    <property type="match status" value="1"/>
</dbReference>
<dbReference type="Gene3D" id="3.40.525.10">
    <property type="entry name" value="CRAL-TRIO lipid binding domain"/>
    <property type="match status" value="1"/>
</dbReference>
<dbReference type="Gene3D" id="1.10.8.20">
    <property type="entry name" value="N-terminal domain of phosphatidylinositol transfer protein sec14p"/>
    <property type="match status" value="1"/>
</dbReference>
<dbReference type="InterPro" id="IPR001251">
    <property type="entry name" value="CRAL-TRIO_dom"/>
</dbReference>
<dbReference type="InterPro" id="IPR036865">
    <property type="entry name" value="CRAL-TRIO_dom_sf"/>
</dbReference>
<dbReference type="InterPro" id="IPR011074">
    <property type="entry name" value="CRAL/TRIO_N_dom"/>
</dbReference>
<dbReference type="InterPro" id="IPR036273">
    <property type="entry name" value="CRAL/TRIO_N_dom_sf"/>
</dbReference>
<dbReference type="InterPro" id="IPR051026">
    <property type="entry name" value="PI/PC_transfer"/>
</dbReference>
<dbReference type="PANTHER" id="PTHR45657">
    <property type="entry name" value="CRAL-TRIO DOMAIN-CONTAINING PROTEIN YKL091C-RELATED"/>
    <property type="match status" value="1"/>
</dbReference>
<dbReference type="PANTHER" id="PTHR45657:SF39">
    <property type="entry name" value="PHOSPHATIDYLINOSITOL_PHOSPHATIDYLCHOLINE TRANSFER PROTEIN SFH1-RELATED"/>
    <property type="match status" value="1"/>
</dbReference>
<dbReference type="Pfam" id="PF00650">
    <property type="entry name" value="CRAL_TRIO"/>
    <property type="match status" value="1"/>
</dbReference>
<dbReference type="Pfam" id="PF03765">
    <property type="entry name" value="CRAL_TRIO_N"/>
    <property type="match status" value="1"/>
</dbReference>
<dbReference type="PRINTS" id="PR00180">
    <property type="entry name" value="CRETINALDHBP"/>
</dbReference>
<dbReference type="SMART" id="SM01100">
    <property type="entry name" value="CRAL_TRIO_N"/>
    <property type="match status" value="1"/>
</dbReference>
<dbReference type="SMART" id="SM00516">
    <property type="entry name" value="SEC14"/>
    <property type="match status" value="1"/>
</dbReference>
<dbReference type="SUPFAM" id="SSF52087">
    <property type="entry name" value="CRAL/TRIO domain"/>
    <property type="match status" value="1"/>
</dbReference>
<dbReference type="SUPFAM" id="SSF46938">
    <property type="entry name" value="CRAL/TRIO N-terminal domain"/>
    <property type="match status" value="1"/>
</dbReference>
<dbReference type="PROSITE" id="PS50191">
    <property type="entry name" value="CRAL_TRIO"/>
    <property type="match status" value="1"/>
</dbReference>